<reference key="1">
    <citation type="journal article" date="2008" name="BMC Microbiol.">
        <title>Complete genome sequence of Treponema pallidum ssp. pallidum strain SS14 determined with oligonucleotide arrays.</title>
        <authorList>
            <person name="Matejkova P."/>
            <person name="Strouhal M."/>
            <person name="Smajs D."/>
            <person name="Norris S.J."/>
            <person name="Palzkill T."/>
            <person name="Petrosino J.F."/>
            <person name="Sodergren E."/>
            <person name="Norton J.E."/>
            <person name="Singh J."/>
            <person name="Richmond T.A."/>
            <person name="Molla M.N."/>
            <person name="Albert T.J."/>
            <person name="Weinstock G.M."/>
        </authorList>
    </citation>
    <scope>NUCLEOTIDE SEQUENCE [LARGE SCALE GENOMIC DNA]</scope>
    <source>
        <strain>SS14</strain>
    </source>
</reference>
<dbReference type="EMBL" id="CP000805">
    <property type="protein sequence ID" value="ACD71325.1"/>
    <property type="molecule type" value="Genomic_DNA"/>
</dbReference>
<dbReference type="RefSeq" id="WP_010882352.1">
    <property type="nucleotide sequence ID" value="NC_021508.1"/>
</dbReference>
<dbReference type="SMR" id="B2S4E6"/>
<dbReference type="GeneID" id="93876659"/>
<dbReference type="KEGG" id="tpp:TPASS_0909"/>
<dbReference type="PATRIC" id="fig|455434.6.peg.895"/>
<dbReference type="Proteomes" id="UP000001202">
    <property type="component" value="Chromosome"/>
</dbReference>
<dbReference type="GO" id="GO:0022625">
    <property type="term" value="C:cytosolic large ribosomal subunit"/>
    <property type="evidence" value="ECO:0007669"/>
    <property type="project" value="TreeGrafter"/>
</dbReference>
<dbReference type="GO" id="GO:0003735">
    <property type="term" value="F:structural constituent of ribosome"/>
    <property type="evidence" value="ECO:0007669"/>
    <property type="project" value="InterPro"/>
</dbReference>
<dbReference type="GO" id="GO:0006412">
    <property type="term" value="P:translation"/>
    <property type="evidence" value="ECO:0007669"/>
    <property type="project" value="UniProtKB-UniRule"/>
</dbReference>
<dbReference type="FunFam" id="2.30.30.790:FF:000001">
    <property type="entry name" value="50S ribosomal protein L19"/>
    <property type="match status" value="1"/>
</dbReference>
<dbReference type="Gene3D" id="2.30.30.790">
    <property type="match status" value="1"/>
</dbReference>
<dbReference type="HAMAP" id="MF_00402">
    <property type="entry name" value="Ribosomal_bL19"/>
    <property type="match status" value="1"/>
</dbReference>
<dbReference type="InterPro" id="IPR001857">
    <property type="entry name" value="Ribosomal_bL19"/>
</dbReference>
<dbReference type="InterPro" id="IPR018257">
    <property type="entry name" value="Ribosomal_bL19_CS"/>
</dbReference>
<dbReference type="InterPro" id="IPR038657">
    <property type="entry name" value="Ribosomal_bL19_sf"/>
</dbReference>
<dbReference type="InterPro" id="IPR008991">
    <property type="entry name" value="Translation_prot_SH3-like_sf"/>
</dbReference>
<dbReference type="NCBIfam" id="TIGR01024">
    <property type="entry name" value="rplS_bact"/>
    <property type="match status" value="1"/>
</dbReference>
<dbReference type="PANTHER" id="PTHR15680:SF9">
    <property type="entry name" value="LARGE RIBOSOMAL SUBUNIT PROTEIN BL19M"/>
    <property type="match status" value="1"/>
</dbReference>
<dbReference type="PANTHER" id="PTHR15680">
    <property type="entry name" value="RIBOSOMAL PROTEIN L19"/>
    <property type="match status" value="1"/>
</dbReference>
<dbReference type="Pfam" id="PF01245">
    <property type="entry name" value="Ribosomal_L19"/>
    <property type="match status" value="1"/>
</dbReference>
<dbReference type="PIRSF" id="PIRSF002191">
    <property type="entry name" value="Ribosomal_L19"/>
    <property type="match status" value="1"/>
</dbReference>
<dbReference type="PRINTS" id="PR00061">
    <property type="entry name" value="RIBOSOMALL19"/>
</dbReference>
<dbReference type="SUPFAM" id="SSF50104">
    <property type="entry name" value="Translation proteins SH3-like domain"/>
    <property type="match status" value="1"/>
</dbReference>
<dbReference type="PROSITE" id="PS01015">
    <property type="entry name" value="RIBOSOMAL_L19"/>
    <property type="match status" value="1"/>
</dbReference>
<evidence type="ECO:0000255" key="1">
    <source>
        <dbReference type="HAMAP-Rule" id="MF_00402"/>
    </source>
</evidence>
<evidence type="ECO:0000305" key="2"/>
<protein>
    <recommendedName>
        <fullName evidence="1">Large ribosomal subunit protein bL19</fullName>
    </recommendedName>
    <alternativeName>
        <fullName evidence="2">50S ribosomal protein L19</fullName>
    </alternativeName>
</protein>
<keyword id="KW-0687">Ribonucleoprotein</keyword>
<keyword id="KW-0689">Ribosomal protein</keyword>
<name>RL19_TREPS</name>
<gene>
    <name evidence="1" type="primary">rplS</name>
    <name type="ordered locus">TPASS_0909</name>
</gene>
<sequence>MSCHLIQQIENQQRKEPAETFRVGDTVRVHFKIVEGKTERIQAYEGLVLCFKNSGVRRTFTVRKNSYGVGVERIFPLHSPRIERVDVVRAGKVRRAKLYYIREKIGKAARIKARIVKKPSPSA</sequence>
<feature type="chain" id="PRO_1000193914" description="Large ribosomal subunit protein bL19">
    <location>
        <begin position="1"/>
        <end position="123"/>
    </location>
</feature>
<organism>
    <name type="scientific">Treponema pallidum subsp. pallidum (strain SS14)</name>
    <dbReference type="NCBI Taxonomy" id="455434"/>
    <lineage>
        <taxon>Bacteria</taxon>
        <taxon>Pseudomonadati</taxon>
        <taxon>Spirochaetota</taxon>
        <taxon>Spirochaetia</taxon>
        <taxon>Spirochaetales</taxon>
        <taxon>Treponemataceae</taxon>
        <taxon>Treponema</taxon>
    </lineage>
</organism>
<proteinExistence type="inferred from homology"/>
<accession>B2S4E6</accession>
<comment type="function">
    <text evidence="1">This protein is located at the 30S-50S ribosomal subunit interface and may play a role in the structure and function of the aminoacyl-tRNA binding site.</text>
</comment>
<comment type="similarity">
    <text evidence="1">Belongs to the bacterial ribosomal protein bL19 family.</text>
</comment>